<reference key="1">
    <citation type="submission" date="2008-10" db="EMBL/GenBank/DDBJ databases">
        <title>The complete genome sequence of Helicobacter pylori strain P12.</title>
        <authorList>
            <person name="Fischer W."/>
            <person name="Windhager L."/>
            <person name="Karnholz A."/>
            <person name="Zeiller M."/>
            <person name="Zimmer R."/>
            <person name="Haas R."/>
        </authorList>
    </citation>
    <scope>NUCLEOTIDE SEQUENCE [LARGE SCALE GENOMIC DNA]</scope>
    <source>
        <strain>P12</strain>
    </source>
</reference>
<keyword id="KW-0012">Acyltransferase</keyword>
<keyword id="KW-0963">Cytoplasm</keyword>
<keyword id="KW-0441">Lipid A biosynthesis</keyword>
<keyword id="KW-0444">Lipid biosynthesis</keyword>
<keyword id="KW-0443">Lipid metabolism</keyword>
<keyword id="KW-0677">Repeat</keyword>
<keyword id="KW-0808">Transferase</keyword>
<protein>
    <recommendedName>
        <fullName evidence="1">Acyl-[acyl-carrier-protein]--UDP-N-acetylglucosamine O-acyltransferase</fullName>
        <shortName evidence="1">UDP-N-acetylglucosamine acyltransferase</shortName>
        <ecNumber evidence="1">2.3.1.129</ecNumber>
    </recommendedName>
</protein>
<name>LPXA_HELP2</name>
<feature type="chain" id="PRO_1000122710" description="Acyl-[acyl-carrier-protein]--UDP-N-acetylglucosamine O-acyltransferase">
    <location>
        <begin position="1"/>
        <end position="270"/>
    </location>
</feature>
<accession>B6JNP1</accession>
<sequence>MSKIAKTAIISPKAEINKGVEIGEFCVIGDGVKLDDGVKLHNNVTLQGHTFIGKNTEIFPFAVLGTQPQDLKYKGEYSELIVGEDNLIREFCMINPGTEGGIKKTLIGDKNLLMAYVHVAHDCVIGSHCILANGVTLAGHIEIGDYVNIGGLTAIHQFVRIAKGCMIAGKSALGKDVPPYCTVEGNRAFIRGLNRHRMRQLLESKDIDFIYALYKRLFRPVPSLRESAKLELEEHANNPFVKEICSFILESSRGVAYKSSEYSSEEKQEE</sequence>
<comment type="function">
    <text evidence="1">Involved in the biosynthesis of lipid A, a phosphorylated glycolipid that anchors the lipopolysaccharide to the outer membrane of the cell.</text>
</comment>
<comment type="catalytic activity">
    <reaction evidence="1">
        <text>a (3R)-hydroxyacyl-[ACP] + UDP-N-acetyl-alpha-D-glucosamine = a UDP-3-O-[(3R)-3-hydroxyacyl]-N-acetyl-alpha-D-glucosamine + holo-[ACP]</text>
        <dbReference type="Rhea" id="RHEA:67812"/>
        <dbReference type="Rhea" id="RHEA-COMP:9685"/>
        <dbReference type="Rhea" id="RHEA-COMP:9945"/>
        <dbReference type="ChEBI" id="CHEBI:57705"/>
        <dbReference type="ChEBI" id="CHEBI:64479"/>
        <dbReference type="ChEBI" id="CHEBI:78827"/>
        <dbReference type="ChEBI" id="CHEBI:173225"/>
        <dbReference type="EC" id="2.3.1.129"/>
    </reaction>
</comment>
<comment type="pathway">
    <text evidence="1">Glycolipid biosynthesis; lipid IV(A) biosynthesis; lipid IV(A) from (3R)-3-hydroxytetradecanoyl-[acyl-carrier-protein] and UDP-N-acetyl-alpha-D-glucosamine: step 1/6.</text>
</comment>
<comment type="subunit">
    <text evidence="1">Homotrimer.</text>
</comment>
<comment type="subcellular location">
    <subcellularLocation>
        <location evidence="1">Cytoplasm</location>
    </subcellularLocation>
</comment>
<comment type="similarity">
    <text evidence="1">Belongs to the transferase hexapeptide repeat family. LpxA subfamily.</text>
</comment>
<organism>
    <name type="scientific">Helicobacter pylori (strain P12)</name>
    <dbReference type="NCBI Taxonomy" id="570508"/>
    <lineage>
        <taxon>Bacteria</taxon>
        <taxon>Pseudomonadati</taxon>
        <taxon>Campylobacterota</taxon>
        <taxon>Epsilonproteobacteria</taxon>
        <taxon>Campylobacterales</taxon>
        <taxon>Helicobacteraceae</taxon>
        <taxon>Helicobacter</taxon>
    </lineage>
</organism>
<proteinExistence type="inferred from homology"/>
<evidence type="ECO:0000255" key="1">
    <source>
        <dbReference type="HAMAP-Rule" id="MF_00387"/>
    </source>
</evidence>
<dbReference type="EC" id="2.3.1.129" evidence="1"/>
<dbReference type="EMBL" id="CP001217">
    <property type="protein sequence ID" value="ACJ08519.1"/>
    <property type="molecule type" value="Genomic_DNA"/>
</dbReference>
<dbReference type="SMR" id="B6JNP1"/>
<dbReference type="KEGG" id="hpp:HPP12_1370"/>
<dbReference type="HOGENOM" id="CLU_061249_0_0_7"/>
<dbReference type="UniPathway" id="UPA00359">
    <property type="reaction ID" value="UER00477"/>
</dbReference>
<dbReference type="Proteomes" id="UP000008198">
    <property type="component" value="Chromosome"/>
</dbReference>
<dbReference type="GO" id="GO:0005737">
    <property type="term" value="C:cytoplasm"/>
    <property type="evidence" value="ECO:0007669"/>
    <property type="project" value="UniProtKB-SubCell"/>
</dbReference>
<dbReference type="GO" id="GO:0016020">
    <property type="term" value="C:membrane"/>
    <property type="evidence" value="ECO:0007669"/>
    <property type="project" value="GOC"/>
</dbReference>
<dbReference type="GO" id="GO:0008780">
    <property type="term" value="F:acyl-[acyl-carrier-protein]-UDP-N-acetylglucosamine O-acyltransferase activity"/>
    <property type="evidence" value="ECO:0007669"/>
    <property type="project" value="UniProtKB-UniRule"/>
</dbReference>
<dbReference type="GO" id="GO:0009245">
    <property type="term" value="P:lipid A biosynthetic process"/>
    <property type="evidence" value="ECO:0007669"/>
    <property type="project" value="UniProtKB-UniRule"/>
</dbReference>
<dbReference type="CDD" id="cd03351">
    <property type="entry name" value="LbH_UDP-GlcNAc_AT"/>
    <property type="match status" value="1"/>
</dbReference>
<dbReference type="Gene3D" id="2.160.10.10">
    <property type="entry name" value="Hexapeptide repeat proteins"/>
    <property type="match status" value="1"/>
</dbReference>
<dbReference type="Gene3D" id="1.20.1180.10">
    <property type="entry name" value="Udp N-acetylglucosamine O-acyltransferase, C-terminal domain"/>
    <property type="match status" value="1"/>
</dbReference>
<dbReference type="HAMAP" id="MF_00387">
    <property type="entry name" value="LpxA"/>
    <property type="match status" value="1"/>
</dbReference>
<dbReference type="InterPro" id="IPR029098">
    <property type="entry name" value="Acetyltransf_C"/>
</dbReference>
<dbReference type="InterPro" id="IPR037157">
    <property type="entry name" value="Acetyltransf_C_sf"/>
</dbReference>
<dbReference type="InterPro" id="IPR001451">
    <property type="entry name" value="Hexapep"/>
</dbReference>
<dbReference type="InterPro" id="IPR010137">
    <property type="entry name" value="Lipid_A_LpxA"/>
</dbReference>
<dbReference type="InterPro" id="IPR011004">
    <property type="entry name" value="Trimer_LpxA-like_sf"/>
</dbReference>
<dbReference type="NCBIfam" id="TIGR01852">
    <property type="entry name" value="lipid_A_lpxA"/>
    <property type="match status" value="1"/>
</dbReference>
<dbReference type="NCBIfam" id="NF003657">
    <property type="entry name" value="PRK05289.1"/>
    <property type="match status" value="1"/>
</dbReference>
<dbReference type="PANTHER" id="PTHR43480">
    <property type="entry name" value="ACYL-[ACYL-CARRIER-PROTEIN]--UDP-N-ACETYLGLUCOSAMINE O-ACYLTRANSFERASE"/>
    <property type="match status" value="1"/>
</dbReference>
<dbReference type="PANTHER" id="PTHR43480:SF1">
    <property type="entry name" value="ACYL-[ACYL-CARRIER-PROTEIN]--UDP-N-ACETYLGLUCOSAMINE O-ACYLTRANSFERASE, MITOCHONDRIAL-RELATED"/>
    <property type="match status" value="1"/>
</dbReference>
<dbReference type="Pfam" id="PF13720">
    <property type="entry name" value="Acetyltransf_11"/>
    <property type="match status" value="1"/>
</dbReference>
<dbReference type="Pfam" id="PF00132">
    <property type="entry name" value="Hexapep"/>
    <property type="match status" value="1"/>
</dbReference>
<dbReference type="PIRSF" id="PIRSF000456">
    <property type="entry name" value="UDP-GlcNAc_acltr"/>
    <property type="match status" value="1"/>
</dbReference>
<dbReference type="SUPFAM" id="SSF51161">
    <property type="entry name" value="Trimeric LpxA-like enzymes"/>
    <property type="match status" value="1"/>
</dbReference>
<dbReference type="PROSITE" id="PS00101">
    <property type="entry name" value="HEXAPEP_TRANSFERASES"/>
    <property type="match status" value="1"/>
</dbReference>
<gene>
    <name evidence="1" type="primary">lpxA</name>
    <name type="ordered locus">HPP12_1370</name>
</gene>